<evidence type="ECO:0000255" key="1"/>
<evidence type="ECO:0000269" key="2">
    <source>
    </source>
</evidence>
<evidence type="ECO:0000269" key="3">
    <source>
    </source>
</evidence>
<evidence type="ECO:0000269" key="4">
    <source>
    </source>
</evidence>
<evidence type="ECO:0000269" key="5">
    <source>
    </source>
</evidence>
<evidence type="ECO:0000269" key="6">
    <source>
    </source>
</evidence>
<evidence type="ECO:0000303" key="7">
    <source>
    </source>
</evidence>
<evidence type="ECO:0000303" key="8">
    <source>
    </source>
</evidence>
<evidence type="ECO:0000305" key="9"/>
<evidence type="ECO:0000305" key="10">
    <source>
    </source>
</evidence>
<evidence type="ECO:0007744" key="11">
    <source>
        <dbReference type="PDB" id="8IP3"/>
    </source>
</evidence>
<evidence type="ECO:0007744" key="12">
    <source>
        <dbReference type="PDB" id="8IP4"/>
    </source>
</evidence>
<evidence type="ECO:0007744" key="13">
    <source>
        <dbReference type="PDB" id="8IP5"/>
    </source>
</evidence>
<evidence type="ECO:0007744" key="14">
    <source>
        <dbReference type="PDB" id="8IP6"/>
    </source>
</evidence>
<evidence type="ECO:0007744" key="15">
    <source>
        <dbReference type="PDB" id="8TS1"/>
    </source>
</evidence>
<evidence type="ECO:0007744" key="16">
    <source>
        <dbReference type="PDB" id="8TS2"/>
    </source>
</evidence>
<evidence type="ECO:0007744" key="17">
    <source>
        <dbReference type="PDB" id="8TS3"/>
    </source>
</evidence>
<evidence type="ECO:0007744" key="18">
    <source>
        <dbReference type="PDB" id="8TUL"/>
    </source>
</evidence>
<evidence type="ECO:0007744" key="19">
    <source>
        <dbReference type="PDB" id="8TUP"/>
    </source>
</evidence>
<evidence type="ECO:0007829" key="20">
    <source>
        <dbReference type="PDB" id="8IP3"/>
    </source>
</evidence>
<evidence type="ECO:0007829" key="21">
    <source>
        <dbReference type="PDB" id="8IP4"/>
    </source>
</evidence>
<evidence type="ECO:0007829" key="22">
    <source>
        <dbReference type="PDB" id="8IP5"/>
    </source>
</evidence>
<evidence type="ECO:0007829" key="23">
    <source>
        <dbReference type="PDB" id="8TUP"/>
    </source>
</evidence>
<gene>
    <name type="primary">MRS2</name>
    <name type="synonym">HPT</name>
    <name type="synonym">MRS2L</name>
</gene>
<protein>
    <recommendedName>
        <fullName>Magnesium transporter MRS2 homolog, mitochondrial</fullName>
    </recommendedName>
    <alternativeName>
        <fullName>MRS2-like protein</fullName>
    </alternativeName>
</protein>
<comment type="function">
    <text evidence="2 3 4 5 6">Magnesium transporter that mediates the influx of magnesium into the mitochondrial matrix and regulates magnesium metabolism (PubMed:11401429, PubMed:18384665, PubMed:37543649, PubMed:37938562, PubMed:39609651). Also permeable to calcium, sodium and potassium ions (PubMed:39609651). Required for normal expression of the mitochondrial respiratory complex I subunits (PubMed:18384665). May play a role in maintaining the inner mitochondrial membrane potential (PubMed:39609651).</text>
</comment>
<comment type="activity regulation">
    <text evidence="6">May be regulated by calcium ions.</text>
</comment>
<comment type="subunit">
    <text evidence="4 5 6">Homopentamer.</text>
</comment>
<comment type="interaction">
    <interactant intactId="EBI-13374520">
        <id>Q9HD23-2</id>
    </interactant>
    <interactant intactId="EBI-2865388">
        <id>Q969G2</id>
        <label>LHX4</label>
    </interactant>
    <organismsDiffer>false</organismsDiffer>
    <experiments>3</experiments>
</comment>
<comment type="subcellular location">
    <subcellularLocation>
        <location evidence="2 10">Mitochondrion inner membrane</location>
        <topology evidence="4 5 6">Multi-pass membrane protein</topology>
    </subcellularLocation>
</comment>
<comment type="alternative products">
    <event type="alternative splicing"/>
    <isoform>
        <id>Q9HD23-1</id>
        <name>1</name>
        <sequence type="displayed"/>
    </isoform>
    <isoform>
        <id>Q9HD23-2</id>
        <name>2</name>
        <sequence type="described" ref="VSP_016209 VSP_016210"/>
    </isoform>
    <isoform>
        <id>Q9HD23-3</id>
        <name>3</name>
        <sequence type="described" ref="VSP_016207 VSP_016208"/>
    </isoform>
    <isoform>
        <id>Q9HD23-4</id>
        <name>4</name>
        <sequence type="described" ref="VSP_055287"/>
    </isoform>
</comment>
<comment type="domain">
    <text evidence="4 5 6">The GMN motif acts as an ion selectivity filter.</text>
</comment>
<comment type="miscellaneous">
    <text>Has the ability to complement a deletion of MRS2 in S.cerevisiae and partly restore mitochondrial magnesium concentrations.</text>
</comment>
<comment type="similarity">
    <text evidence="9">Belongs to the CorA metal ion transporter (MIT) (TC 1.A.35) family.</text>
</comment>
<reference key="1">
    <citation type="journal article" date="2001" name="Genomics">
        <title>The human mitochondrial Mrs2 protein functionally substitutes for its yeast homologue, a candidate magnesium transporter.</title>
        <authorList>
            <person name="Zsurka G."/>
            <person name="Gregan J."/>
            <person name="Schweyen R.J."/>
        </authorList>
    </citation>
    <scope>NUCLEOTIDE SEQUENCE [MRNA] (ISOFORM 1)</scope>
    <scope>NUCLEOTIDE SEQUENCE [GENOMIC DNA] OF 241-278</scope>
    <scope>FUNCTION</scope>
    <scope>SUBCELLULAR LOCATION</scope>
</reference>
<reference key="2">
    <citation type="submission" date="2000-07" db="EMBL/GenBank/DDBJ databases">
        <title>Putative mammalian magnesium transporters.</title>
        <authorList>
            <person name="Bosma T.J."/>
            <person name="MacDiarmid C.W."/>
            <person name="Gardner R.C."/>
        </authorList>
    </citation>
    <scope>NUCLEOTIDE SEQUENCE [MRNA] (ISOFORM 1)</scope>
</reference>
<reference key="3">
    <citation type="journal article" date="2004" name="Nat. Genet.">
        <title>Complete sequencing and characterization of 21,243 full-length human cDNAs.</title>
        <authorList>
            <person name="Ota T."/>
            <person name="Suzuki Y."/>
            <person name="Nishikawa T."/>
            <person name="Otsuki T."/>
            <person name="Sugiyama T."/>
            <person name="Irie R."/>
            <person name="Wakamatsu A."/>
            <person name="Hayashi K."/>
            <person name="Sato H."/>
            <person name="Nagai K."/>
            <person name="Kimura K."/>
            <person name="Makita H."/>
            <person name="Sekine M."/>
            <person name="Obayashi M."/>
            <person name="Nishi T."/>
            <person name="Shibahara T."/>
            <person name="Tanaka T."/>
            <person name="Ishii S."/>
            <person name="Yamamoto J."/>
            <person name="Saito K."/>
            <person name="Kawai Y."/>
            <person name="Isono Y."/>
            <person name="Nakamura Y."/>
            <person name="Nagahari K."/>
            <person name="Murakami K."/>
            <person name="Yasuda T."/>
            <person name="Iwayanagi T."/>
            <person name="Wagatsuma M."/>
            <person name="Shiratori A."/>
            <person name="Sudo H."/>
            <person name="Hosoiri T."/>
            <person name="Kaku Y."/>
            <person name="Kodaira H."/>
            <person name="Kondo H."/>
            <person name="Sugawara M."/>
            <person name="Takahashi M."/>
            <person name="Kanda K."/>
            <person name="Yokoi T."/>
            <person name="Furuya T."/>
            <person name="Kikkawa E."/>
            <person name="Omura Y."/>
            <person name="Abe K."/>
            <person name="Kamihara K."/>
            <person name="Katsuta N."/>
            <person name="Sato K."/>
            <person name="Tanikawa M."/>
            <person name="Yamazaki M."/>
            <person name="Ninomiya K."/>
            <person name="Ishibashi T."/>
            <person name="Yamashita H."/>
            <person name="Murakawa K."/>
            <person name="Fujimori K."/>
            <person name="Tanai H."/>
            <person name="Kimata M."/>
            <person name="Watanabe M."/>
            <person name="Hiraoka S."/>
            <person name="Chiba Y."/>
            <person name="Ishida S."/>
            <person name="Ono Y."/>
            <person name="Takiguchi S."/>
            <person name="Watanabe S."/>
            <person name="Yosida M."/>
            <person name="Hotuta T."/>
            <person name="Kusano J."/>
            <person name="Kanehori K."/>
            <person name="Takahashi-Fujii A."/>
            <person name="Hara H."/>
            <person name="Tanase T.-O."/>
            <person name="Nomura Y."/>
            <person name="Togiya S."/>
            <person name="Komai F."/>
            <person name="Hara R."/>
            <person name="Takeuchi K."/>
            <person name="Arita M."/>
            <person name="Imose N."/>
            <person name="Musashino K."/>
            <person name="Yuuki H."/>
            <person name="Oshima A."/>
            <person name="Sasaki N."/>
            <person name="Aotsuka S."/>
            <person name="Yoshikawa Y."/>
            <person name="Matsunawa H."/>
            <person name="Ichihara T."/>
            <person name="Shiohata N."/>
            <person name="Sano S."/>
            <person name="Moriya S."/>
            <person name="Momiyama H."/>
            <person name="Satoh N."/>
            <person name="Takami S."/>
            <person name="Terashima Y."/>
            <person name="Suzuki O."/>
            <person name="Nakagawa S."/>
            <person name="Senoh A."/>
            <person name="Mizoguchi H."/>
            <person name="Goto Y."/>
            <person name="Shimizu F."/>
            <person name="Wakebe H."/>
            <person name="Hishigaki H."/>
            <person name="Watanabe T."/>
            <person name="Sugiyama A."/>
            <person name="Takemoto M."/>
            <person name="Kawakami B."/>
            <person name="Yamazaki M."/>
            <person name="Watanabe K."/>
            <person name="Kumagai A."/>
            <person name="Itakura S."/>
            <person name="Fukuzumi Y."/>
            <person name="Fujimori Y."/>
            <person name="Komiyama M."/>
            <person name="Tashiro H."/>
            <person name="Tanigami A."/>
            <person name="Fujiwara T."/>
            <person name="Ono T."/>
            <person name="Yamada K."/>
            <person name="Fujii Y."/>
            <person name="Ozaki K."/>
            <person name="Hirao M."/>
            <person name="Ohmori Y."/>
            <person name="Kawabata A."/>
            <person name="Hikiji T."/>
            <person name="Kobatake N."/>
            <person name="Inagaki H."/>
            <person name="Ikema Y."/>
            <person name="Okamoto S."/>
            <person name="Okitani R."/>
            <person name="Kawakami T."/>
            <person name="Noguchi S."/>
            <person name="Itoh T."/>
            <person name="Shigeta K."/>
            <person name="Senba T."/>
            <person name="Matsumura K."/>
            <person name="Nakajima Y."/>
            <person name="Mizuno T."/>
            <person name="Morinaga M."/>
            <person name="Sasaki M."/>
            <person name="Togashi T."/>
            <person name="Oyama M."/>
            <person name="Hata H."/>
            <person name="Watanabe M."/>
            <person name="Komatsu T."/>
            <person name="Mizushima-Sugano J."/>
            <person name="Satoh T."/>
            <person name="Shirai Y."/>
            <person name="Takahashi Y."/>
            <person name="Nakagawa K."/>
            <person name="Okumura K."/>
            <person name="Nagase T."/>
            <person name="Nomura N."/>
            <person name="Kikuchi H."/>
            <person name="Masuho Y."/>
            <person name="Yamashita R."/>
            <person name="Nakai K."/>
            <person name="Yada T."/>
            <person name="Nakamura Y."/>
            <person name="Ohara O."/>
            <person name="Isogai T."/>
            <person name="Sugano S."/>
        </authorList>
    </citation>
    <scope>NUCLEOTIDE SEQUENCE [LARGE SCALE MRNA] (ISOFORMS 1; 2 AND 4)</scope>
</reference>
<reference key="4">
    <citation type="journal article" date="2003" name="Nature">
        <title>The DNA sequence and analysis of human chromosome 6.</title>
        <authorList>
            <person name="Mungall A.J."/>
            <person name="Palmer S.A."/>
            <person name="Sims S.K."/>
            <person name="Edwards C.A."/>
            <person name="Ashurst J.L."/>
            <person name="Wilming L."/>
            <person name="Jones M.C."/>
            <person name="Horton R."/>
            <person name="Hunt S.E."/>
            <person name="Scott C.E."/>
            <person name="Gilbert J.G.R."/>
            <person name="Clamp M.E."/>
            <person name="Bethel G."/>
            <person name="Milne S."/>
            <person name="Ainscough R."/>
            <person name="Almeida J.P."/>
            <person name="Ambrose K.D."/>
            <person name="Andrews T.D."/>
            <person name="Ashwell R.I.S."/>
            <person name="Babbage A.K."/>
            <person name="Bagguley C.L."/>
            <person name="Bailey J."/>
            <person name="Banerjee R."/>
            <person name="Barker D.J."/>
            <person name="Barlow K.F."/>
            <person name="Bates K."/>
            <person name="Beare D.M."/>
            <person name="Beasley H."/>
            <person name="Beasley O."/>
            <person name="Bird C.P."/>
            <person name="Blakey S.E."/>
            <person name="Bray-Allen S."/>
            <person name="Brook J."/>
            <person name="Brown A.J."/>
            <person name="Brown J.Y."/>
            <person name="Burford D.C."/>
            <person name="Burrill W."/>
            <person name="Burton J."/>
            <person name="Carder C."/>
            <person name="Carter N.P."/>
            <person name="Chapman J.C."/>
            <person name="Clark S.Y."/>
            <person name="Clark G."/>
            <person name="Clee C.M."/>
            <person name="Clegg S."/>
            <person name="Cobley V."/>
            <person name="Collier R.E."/>
            <person name="Collins J.E."/>
            <person name="Colman L.K."/>
            <person name="Corby N.R."/>
            <person name="Coville G.J."/>
            <person name="Culley K.M."/>
            <person name="Dhami P."/>
            <person name="Davies J."/>
            <person name="Dunn M."/>
            <person name="Earthrowl M.E."/>
            <person name="Ellington A.E."/>
            <person name="Evans K.A."/>
            <person name="Faulkner L."/>
            <person name="Francis M.D."/>
            <person name="Frankish A."/>
            <person name="Frankland J."/>
            <person name="French L."/>
            <person name="Garner P."/>
            <person name="Garnett J."/>
            <person name="Ghori M.J."/>
            <person name="Gilby L.M."/>
            <person name="Gillson C.J."/>
            <person name="Glithero R.J."/>
            <person name="Grafham D.V."/>
            <person name="Grant M."/>
            <person name="Gribble S."/>
            <person name="Griffiths C."/>
            <person name="Griffiths M.N.D."/>
            <person name="Hall R."/>
            <person name="Halls K.S."/>
            <person name="Hammond S."/>
            <person name="Harley J.L."/>
            <person name="Hart E.A."/>
            <person name="Heath P.D."/>
            <person name="Heathcott R."/>
            <person name="Holmes S.J."/>
            <person name="Howden P.J."/>
            <person name="Howe K.L."/>
            <person name="Howell G.R."/>
            <person name="Huckle E."/>
            <person name="Humphray S.J."/>
            <person name="Humphries M.D."/>
            <person name="Hunt A.R."/>
            <person name="Johnson C.M."/>
            <person name="Joy A.A."/>
            <person name="Kay M."/>
            <person name="Keenan S.J."/>
            <person name="Kimberley A.M."/>
            <person name="King A."/>
            <person name="Laird G.K."/>
            <person name="Langford C."/>
            <person name="Lawlor S."/>
            <person name="Leongamornlert D.A."/>
            <person name="Leversha M."/>
            <person name="Lloyd C.R."/>
            <person name="Lloyd D.M."/>
            <person name="Loveland J.E."/>
            <person name="Lovell J."/>
            <person name="Martin S."/>
            <person name="Mashreghi-Mohammadi M."/>
            <person name="Maslen G.L."/>
            <person name="Matthews L."/>
            <person name="McCann O.T."/>
            <person name="McLaren S.J."/>
            <person name="McLay K."/>
            <person name="McMurray A."/>
            <person name="Moore M.J.F."/>
            <person name="Mullikin J.C."/>
            <person name="Niblett D."/>
            <person name="Nickerson T."/>
            <person name="Novik K.L."/>
            <person name="Oliver K."/>
            <person name="Overton-Larty E.K."/>
            <person name="Parker A."/>
            <person name="Patel R."/>
            <person name="Pearce A.V."/>
            <person name="Peck A.I."/>
            <person name="Phillimore B.J.C.T."/>
            <person name="Phillips S."/>
            <person name="Plumb R.W."/>
            <person name="Porter K.M."/>
            <person name="Ramsey Y."/>
            <person name="Ranby S.A."/>
            <person name="Rice C.M."/>
            <person name="Ross M.T."/>
            <person name="Searle S.M."/>
            <person name="Sehra H.K."/>
            <person name="Sheridan E."/>
            <person name="Skuce C.D."/>
            <person name="Smith S."/>
            <person name="Smith M."/>
            <person name="Spraggon L."/>
            <person name="Squares S.L."/>
            <person name="Steward C.A."/>
            <person name="Sycamore N."/>
            <person name="Tamlyn-Hall G."/>
            <person name="Tester J."/>
            <person name="Theaker A.J."/>
            <person name="Thomas D.W."/>
            <person name="Thorpe A."/>
            <person name="Tracey A."/>
            <person name="Tromans A."/>
            <person name="Tubby B."/>
            <person name="Wall M."/>
            <person name="Wallis J.M."/>
            <person name="West A.P."/>
            <person name="White S.S."/>
            <person name="Whitehead S.L."/>
            <person name="Whittaker H."/>
            <person name="Wild A."/>
            <person name="Willey D.J."/>
            <person name="Wilmer T.E."/>
            <person name="Wood J.M."/>
            <person name="Wray P.W."/>
            <person name="Wyatt J.C."/>
            <person name="Young L."/>
            <person name="Younger R.M."/>
            <person name="Bentley D.R."/>
            <person name="Coulson A."/>
            <person name="Durbin R.M."/>
            <person name="Hubbard T."/>
            <person name="Sulston J.E."/>
            <person name="Dunham I."/>
            <person name="Rogers J."/>
            <person name="Beck S."/>
        </authorList>
    </citation>
    <scope>NUCLEOTIDE SEQUENCE [LARGE SCALE GENOMIC DNA]</scope>
</reference>
<reference key="5">
    <citation type="submission" date="2005-07" db="EMBL/GenBank/DDBJ databases">
        <authorList>
            <person name="Mural R.J."/>
            <person name="Istrail S."/>
            <person name="Sutton G.G."/>
            <person name="Florea L."/>
            <person name="Halpern A.L."/>
            <person name="Mobarry C.M."/>
            <person name="Lippert R."/>
            <person name="Walenz B."/>
            <person name="Shatkay H."/>
            <person name="Dew I."/>
            <person name="Miller J.R."/>
            <person name="Flanigan M.J."/>
            <person name="Edwards N.J."/>
            <person name="Bolanos R."/>
            <person name="Fasulo D."/>
            <person name="Halldorsson B.V."/>
            <person name="Hannenhalli S."/>
            <person name="Turner R."/>
            <person name="Yooseph S."/>
            <person name="Lu F."/>
            <person name="Nusskern D.R."/>
            <person name="Shue B.C."/>
            <person name="Zheng X.H."/>
            <person name="Zhong F."/>
            <person name="Delcher A.L."/>
            <person name="Huson D.H."/>
            <person name="Kravitz S.A."/>
            <person name="Mouchard L."/>
            <person name="Reinert K."/>
            <person name="Remington K.A."/>
            <person name="Clark A.G."/>
            <person name="Waterman M.S."/>
            <person name="Eichler E.E."/>
            <person name="Adams M.D."/>
            <person name="Hunkapiller M.W."/>
            <person name="Myers E.W."/>
            <person name="Venter J.C."/>
        </authorList>
    </citation>
    <scope>NUCLEOTIDE SEQUENCE [LARGE SCALE GENOMIC DNA]</scope>
</reference>
<reference key="6">
    <citation type="journal article" date="2004" name="Genome Res.">
        <title>The status, quality, and expansion of the NIH full-length cDNA project: the Mammalian Gene Collection (MGC).</title>
        <authorList>
            <consortium name="The MGC Project Team"/>
        </authorList>
    </citation>
    <scope>NUCLEOTIDE SEQUENCE [LARGE SCALE MRNA] (ISOFORMS 2 AND 3)</scope>
    <source>
        <tissue>Lung</tissue>
        <tissue>Lymph</tissue>
    </source>
</reference>
<reference key="7">
    <citation type="journal article" date="2009" name="J. Cell. Mol. Med.">
        <title>Conditional knockdown of hMRS2 results in loss of mitochondrial Mg(2+) uptake and cell death.</title>
        <authorList>
            <person name="Piskacek M."/>
            <person name="Zotova L."/>
            <person name="Zsurka G."/>
            <person name="Schweyen R.J."/>
        </authorList>
    </citation>
    <scope>FUNCTION</scope>
</reference>
<reference key="8">
    <citation type="journal article" date="2009" name="Science">
        <title>Lysine acetylation targets protein complexes and co-regulates major cellular functions.</title>
        <authorList>
            <person name="Choudhary C."/>
            <person name="Kumar C."/>
            <person name="Gnad F."/>
            <person name="Nielsen M.L."/>
            <person name="Rehman M."/>
            <person name="Walther T.C."/>
            <person name="Olsen J.V."/>
            <person name="Mann M."/>
        </authorList>
    </citation>
    <scope>IDENTIFICATION BY MASS SPECTROMETRY [LARGE SCALE ANALYSIS]</scope>
</reference>
<reference evidence="11 12 13 14" key="9">
    <citation type="journal article" date="2023" name="Nat. Commun.">
        <title>Molecular basis of Mg2+ permeation through the human mitochondrial Mrs2 channel.</title>
        <authorList>
            <person name="Li M."/>
            <person name="Li Y."/>
            <person name="Lu Y."/>
            <person name="Li J."/>
            <person name="Lu X."/>
            <person name="Ren Y."/>
            <person name="Wen T."/>
            <person name="Wang Y."/>
            <person name="Chang S."/>
            <person name="Zhang X."/>
            <person name="Yang X."/>
            <person name="Shen Y."/>
        </authorList>
    </citation>
    <scope>STRUCTURE BY ELECTRON MICROSCOPY (2.50 ANGSTROMS) IN COMPLEX WITH MAGNESIUM</scope>
    <scope>FUNCTION</scope>
    <scope>SUBUNIT</scope>
    <scope>SUBCELLULAR LOCATION</scope>
    <scope>DOMAIN</scope>
    <scope>TOPOLOGY</scope>
</reference>
<reference evidence="18 19" key="10">
    <citation type="journal article" date="2023" name="Nat. Commun.">
        <title>Cryo-EM structures of human magnesium channel MRS2 reveal gating and regulatory mechanisms.</title>
        <authorList>
            <person name="Lai L.T.F."/>
            <person name="Balaraman J."/>
            <person name="Zhou F."/>
            <person name="Matthies D."/>
        </authorList>
    </citation>
    <scope>STRUCTURE BY ELECTRON MICROSCOPY (2.80 ANGSTROMS) IN COMPLEX WITH MAGNESIUM</scope>
    <scope>FUNCTION</scope>
    <scope>SUBUNIT</scope>
    <scope>SUBCELLULAR LOCATION</scope>
    <scope>DOMAIN</scope>
    <scope>TOPOLOGY</scope>
</reference>
<reference evidence="15 16 17" key="11">
    <citation type="journal article" date="2024" name="Nat. Struct. Mol. Biol.">
        <title>Structure and function of the human mitochondrial MRS2 channel.</title>
        <authorList>
            <person name="He Z."/>
            <person name="Tu Y.C."/>
            <person name="Tsai C.W."/>
            <person name="Mount J."/>
            <person name="Zhang J."/>
            <person name="Tsai M.F."/>
            <person name="Yuan P."/>
        </authorList>
    </citation>
    <scope>STRUCTURE BY ELECTRON MICROSCOPY (2.92 ANGSTROMS) OF 62-431 IN COMPLEX WITH MAGNESIUM AND CALCIUM</scope>
    <scope>FUNCTION</scope>
    <scope>ACTIVITY REGULATION</scope>
    <scope>SUBUNIT</scope>
    <scope>SUBCELLULAR LOCATION</scope>
    <scope>DOMAIN</scope>
    <scope>TOPOLOGY</scope>
    <scope>MUTAGENESIS OF GLU-243; ASP-247; GLU-312; ASP-318; ASP-329; ARG-332 AND ASN-362</scope>
</reference>
<dbReference type="EMBL" id="AF293076">
    <property type="protein sequence ID" value="AAK38615.1"/>
    <property type="molecule type" value="mRNA"/>
</dbReference>
<dbReference type="EMBL" id="AF293078">
    <property type="protein sequence ID" value="AAK38617.1"/>
    <property type="molecule type" value="Genomic_DNA"/>
</dbReference>
<dbReference type="EMBL" id="AF288288">
    <property type="protein sequence ID" value="AAG01170.1"/>
    <property type="molecule type" value="mRNA"/>
</dbReference>
<dbReference type="EMBL" id="AK054587">
    <property type="protein sequence ID" value="BAG51394.1"/>
    <property type="molecule type" value="mRNA"/>
</dbReference>
<dbReference type="EMBL" id="AK291058">
    <property type="protein sequence ID" value="BAF83747.1"/>
    <property type="molecule type" value="mRNA"/>
</dbReference>
<dbReference type="EMBL" id="AK298849">
    <property type="protein sequence ID" value="BAG60974.1"/>
    <property type="molecule type" value="mRNA"/>
</dbReference>
<dbReference type="EMBL" id="AL359713">
    <property type="status" value="NOT_ANNOTATED_CDS"/>
    <property type="molecule type" value="Genomic_DNA"/>
</dbReference>
<dbReference type="EMBL" id="CH471087">
    <property type="protein sequence ID" value="EAW55445.1"/>
    <property type="molecule type" value="Genomic_DNA"/>
</dbReference>
<dbReference type="EMBL" id="CH471087">
    <property type="protein sequence ID" value="EAW55446.1"/>
    <property type="molecule type" value="Genomic_DNA"/>
</dbReference>
<dbReference type="EMBL" id="BC001028">
    <property type="protein sequence ID" value="AAH01028.2"/>
    <property type="molecule type" value="mRNA"/>
</dbReference>
<dbReference type="EMBL" id="BC069009">
    <property type="protein sequence ID" value="AAH69009.1"/>
    <property type="molecule type" value="mRNA"/>
</dbReference>
<dbReference type="CCDS" id="CCDS4552.1">
    <molecule id="Q9HD23-1"/>
</dbReference>
<dbReference type="CCDS" id="CCDS69055.1">
    <molecule id="Q9HD23-4"/>
</dbReference>
<dbReference type="CCDS" id="CCDS75408.1">
    <molecule id="Q9HD23-2"/>
</dbReference>
<dbReference type="RefSeq" id="NP_001273193.1">
    <molecule id="Q9HD23-4"/>
    <property type="nucleotide sequence ID" value="NM_001286264.2"/>
</dbReference>
<dbReference type="RefSeq" id="NP_001273194.1">
    <molecule id="Q9HD23-2"/>
    <property type="nucleotide sequence ID" value="NM_001286265.2"/>
</dbReference>
<dbReference type="RefSeq" id="NP_001273195.1">
    <property type="nucleotide sequence ID" value="NM_001286266.1"/>
</dbReference>
<dbReference type="RefSeq" id="NP_065713.1">
    <molecule id="Q9HD23-1"/>
    <property type="nucleotide sequence ID" value="NM_020662.4"/>
</dbReference>
<dbReference type="PDB" id="8IP3">
    <property type="method" value="EM"/>
    <property type="resolution" value="2.60 A"/>
    <property type="chains" value="A/B/C/D/E=1-443"/>
</dbReference>
<dbReference type="PDB" id="8IP4">
    <property type="method" value="EM"/>
    <property type="resolution" value="2.70 A"/>
    <property type="chains" value="A/B/C/D/E=1-443"/>
</dbReference>
<dbReference type="PDB" id="8IP5">
    <property type="method" value="EM"/>
    <property type="resolution" value="2.50 A"/>
    <property type="chains" value="A/B/C/D/E=1-443"/>
</dbReference>
<dbReference type="PDB" id="8IP6">
    <property type="method" value="EM"/>
    <property type="resolution" value="2.90 A"/>
    <property type="chains" value="A/B/C/D/E=1-443"/>
</dbReference>
<dbReference type="PDB" id="8TS1">
    <property type="method" value="EM"/>
    <property type="resolution" value="2.92 A"/>
    <property type="chains" value="A/B/C/D/E=62-431"/>
</dbReference>
<dbReference type="PDB" id="8TS2">
    <property type="method" value="EM"/>
    <property type="resolution" value="2.95 A"/>
    <property type="chains" value="A/B/C/D/E=62-431"/>
</dbReference>
<dbReference type="PDB" id="8TS3">
    <property type="method" value="EM"/>
    <property type="resolution" value="3.11 A"/>
    <property type="chains" value="A/B/C/D/E=62-431"/>
</dbReference>
<dbReference type="PDB" id="8TUL">
    <property type="method" value="EM"/>
    <property type="resolution" value="2.80 A"/>
    <property type="chains" value="A/B/C/D/E=1-443"/>
</dbReference>
<dbReference type="PDB" id="8TUP">
    <property type="method" value="EM"/>
    <property type="resolution" value="3.30 A"/>
    <property type="chains" value="A/B/C/D/E=1-443"/>
</dbReference>
<dbReference type="PDBsum" id="8IP3"/>
<dbReference type="PDBsum" id="8IP4"/>
<dbReference type="PDBsum" id="8IP5"/>
<dbReference type="PDBsum" id="8IP6"/>
<dbReference type="PDBsum" id="8TS1"/>
<dbReference type="PDBsum" id="8TS2"/>
<dbReference type="PDBsum" id="8TS3"/>
<dbReference type="PDBsum" id="8TUL"/>
<dbReference type="PDBsum" id="8TUP"/>
<dbReference type="EMDB" id="EMD-35630"/>
<dbReference type="EMDB" id="EMD-35631"/>
<dbReference type="EMDB" id="EMD-35632"/>
<dbReference type="EMDB" id="EMD-35633"/>
<dbReference type="EMDB" id="EMD-41624"/>
<dbReference type="EMDB" id="EMD-41628"/>
<dbReference type="EMDB" id="EMD-41629"/>
<dbReference type="EMDB" id="EMD-41630"/>
<dbReference type="SMR" id="Q9HD23"/>
<dbReference type="BioGRID" id="121498">
    <property type="interactions" value="88"/>
</dbReference>
<dbReference type="FunCoup" id="Q9HD23">
    <property type="interactions" value="1540"/>
</dbReference>
<dbReference type="IntAct" id="Q9HD23">
    <property type="interactions" value="71"/>
</dbReference>
<dbReference type="MINT" id="Q9HD23"/>
<dbReference type="STRING" id="9606.ENSP00000399585"/>
<dbReference type="DrugBank" id="DB14513">
    <property type="generic name" value="Magnesium"/>
</dbReference>
<dbReference type="TCDB" id="1.A.35.5.7">
    <property type="family name" value="the cora metal ion transporter (mit) family"/>
</dbReference>
<dbReference type="iPTMnet" id="Q9HD23"/>
<dbReference type="PhosphoSitePlus" id="Q9HD23"/>
<dbReference type="BioMuta" id="MRS2"/>
<dbReference type="DMDM" id="74752816"/>
<dbReference type="jPOST" id="Q9HD23"/>
<dbReference type="MassIVE" id="Q9HD23"/>
<dbReference type="PaxDb" id="9606-ENSP00000399585"/>
<dbReference type="PeptideAtlas" id="Q9HD23"/>
<dbReference type="ProteomicsDB" id="4888"/>
<dbReference type="ProteomicsDB" id="81814">
    <molecule id="Q9HD23-1"/>
</dbReference>
<dbReference type="ProteomicsDB" id="81815">
    <molecule id="Q9HD23-2"/>
</dbReference>
<dbReference type="ProteomicsDB" id="81816">
    <molecule id="Q9HD23-3"/>
</dbReference>
<dbReference type="Pumba" id="Q9HD23"/>
<dbReference type="Antibodypedia" id="25267">
    <property type="antibodies" value="56 antibodies from 13 providers"/>
</dbReference>
<dbReference type="DNASU" id="57380"/>
<dbReference type="Ensembl" id="ENST00000378353.5">
    <molecule id="Q9HD23-2"/>
    <property type="protein sequence ID" value="ENSP00000367604.1"/>
    <property type="gene ID" value="ENSG00000124532.15"/>
</dbReference>
<dbReference type="Ensembl" id="ENST00000378386.8">
    <molecule id="Q9HD23-1"/>
    <property type="protein sequence ID" value="ENSP00000367637.3"/>
    <property type="gene ID" value="ENSG00000124532.15"/>
</dbReference>
<dbReference type="Ensembl" id="ENST00000443868.6">
    <molecule id="Q9HD23-4"/>
    <property type="protein sequence ID" value="ENSP00000399585.2"/>
    <property type="gene ID" value="ENSG00000124532.15"/>
</dbReference>
<dbReference type="GeneID" id="57380"/>
<dbReference type="KEGG" id="hsa:57380"/>
<dbReference type="MANE-Select" id="ENST00000378386.8">
    <property type="protein sequence ID" value="ENSP00000367637.3"/>
    <property type="RefSeq nucleotide sequence ID" value="NM_020662.4"/>
    <property type="RefSeq protein sequence ID" value="NP_065713.1"/>
</dbReference>
<dbReference type="UCSC" id="uc003nea.5">
    <molecule id="Q9HD23-1"/>
    <property type="organism name" value="human"/>
</dbReference>
<dbReference type="AGR" id="HGNC:13785"/>
<dbReference type="CTD" id="57380"/>
<dbReference type="DisGeNET" id="57380"/>
<dbReference type="GeneCards" id="MRS2"/>
<dbReference type="HGNC" id="HGNC:13785">
    <property type="gene designation" value="MRS2"/>
</dbReference>
<dbReference type="HPA" id="ENSG00000124532">
    <property type="expression patterns" value="Low tissue specificity"/>
</dbReference>
<dbReference type="MalaCards" id="MRS2"/>
<dbReference type="MIM" id="619307">
    <property type="type" value="gene"/>
</dbReference>
<dbReference type="neXtProt" id="NX_Q9HD23"/>
<dbReference type="OpenTargets" id="ENSG00000124532"/>
<dbReference type="PharmGKB" id="PA162396189"/>
<dbReference type="VEuPathDB" id="HostDB:ENSG00000124532"/>
<dbReference type="eggNOG" id="KOG2662">
    <property type="taxonomic scope" value="Eukaryota"/>
</dbReference>
<dbReference type="GeneTree" id="ENSGT00390000009988"/>
<dbReference type="HOGENOM" id="CLU_047261_0_0_1"/>
<dbReference type="InParanoid" id="Q9HD23"/>
<dbReference type="OMA" id="TRNNCII"/>
<dbReference type="OrthoDB" id="10251508at2759"/>
<dbReference type="PAN-GO" id="Q9HD23">
    <property type="GO annotations" value="3 GO annotations based on evolutionary models"/>
</dbReference>
<dbReference type="PhylomeDB" id="Q9HD23"/>
<dbReference type="TreeFam" id="TF328433"/>
<dbReference type="PathwayCommons" id="Q9HD23"/>
<dbReference type="Reactome" id="R-HSA-5223345">
    <property type="pathway name" value="Miscellaneous transport and binding events"/>
</dbReference>
<dbReference type="SignaLink" id="Q9HD23"/>
<dbReference type="BioGRID-ORCS" id="57380">
    <property type="hits" value="20 hits in 1155 CRISPR screens"/>
</dbReference>
<dbReference type="ChiTaRS" id="MRS2">
    <property type="organism name" value="human"/>
</dbReference>
<dbReference type="GeneWiki" id="MRS2L"/>
<dbReference type="GenomeRNAi" id="57380"/>
<dbReference type="Pharos" id="Q9HD23">
    <property type="development level" value="Tbio"/>
</dbReference>
<dbReference type="PRO" id="PR:Q9HD23"/>
<dbReference type="Proteomes" id="UP000005640">
    <property type="component" value="Chromosome 6"/>
</dbReference>
<dbReference type="RNAct" id="Q9HD23">
    <property type="molecule type" value="protein"/>
</dbReference>
<dbReference type="Bgee" id="ENSG00000124532">
    <property type="expression patterns" value="Expressed in biceps brachii and 202 other cell types or tissues"/>
</dbReference>
<dbReference type="ExpressionAtlas" id="Q9HD23">
    <property type="expression patterns" value="baseline and differential"/>
</dbReference>
<dbReference type="GO" id="GO:0005743">
    <property type="term" value="C:mitochondrial inner membrane"/>
    <property type="evidence" value="ECO:0000318"/>
    <property type="project" value="GO_Central"/>
</dbReference>
<dbReference type="GO" id="GO:0005739">
    <property type="term" value="C:mitochondrion"/>
    <property type="evidence" value="ECO:0000314"/>
    <property type="project" value="UniProtKB"/>
</dbReference>
<dbReference type="GO" id="GO:0015095">
    <property type="term" value="F:magnesium ion transmembrane transporter activity"/>
    <property type="evidence" value="ECO:0000315"/>
    <property type="project" value="UniProtKB"/>
</dbReference>
<dbReference type="GO" id="GO:0006089">
    <property type="term" value="P:lactate metabolic process"/>
    <property type="evidence" value="ECO:0007669"/>
    <property type="project" value="Ensembl"/>
</dbReference>
<dbReference type="GO" id="GO:0045016">
    <property type="term" value="P:mitochondrial magnesium ion transmembrane transport"/>
    <property type="evidence" value="ECO:0000315"/>
    <property type="project" value="UniProtKB"/>
</dbReference>
<dbReference type="GO" id="GO:0055085">
    <property type="term" value="P:transmembrane transport"/>
    <property type="evidence" value="ECO:0000304"/>
    <property type="project" value="Reactome"/>
</dbReference>
<dbReference type="CDD" id="cd12823">
    <property type="entry name" value="Mrs2_Mfm1p-like"/>
    <property type="match status" value="1"/>
</dbReference>
<dbReference type="FunFam" id="1.20.58.340:FF:000007">
    <property type="entry name" value="Magnesium transporter MRS2 homolog, mitochondrial"/>
    <property type="match status" value="1"/>
</dbReference>
<dbReference type="FunFam" id="2.40.128.330:FF:000003">
    <property type="entry name" value="Magnesium transporter MRS2 homolog, mitochondrial"/>
    <property type="match status" value="1"/>
</dbReference>
<dbReference type="Gene3D" id="2.40.128.330">
    <property type="match status" value="1"/>
</dbReference>
<dbReference type="Gene3D" id="1.20.58.340">
    <property type="entry name" value="Magnesium transport protein CorA, transmembrane region"/>
    <property type="match status" value="1"/>
</dbReference>
<dbReference type="InterPro" id="IPR039204">
    <property type="entry name" value="MRS2-like"/>
</dbReference>
<dbReference type="PANTHER" id="PTHR13890:SF0">
    <property type="entry name" value="MAGNESIUM TRANSPORTER MRS2 HOMOLOG, MITOCHONDRIAL"/>
    <property type="match status" value="1"/>
</dbReference>
<dbReference type="PANTHER" id="PTHR13890">
    <property type="entry name" value="RNA SPLICING PROTEIN MRS2, MITOCHONDRIAL"/>
    <property type="match status" value="1"/>
</dbReference>
<dbReference type="Pfam" id="PF22099">
    <property type="entry name" value="MRS2-like"/>
    <property type="match status" value="1"/>
</dbReference>
<keyword id="KW-0002">3D-structure</keyword>
<keyword id="KW-0025">Alternative splicing</keyword>
<keyword id="KW-0406">Ion transport</keyword>
<keyword id="KW-0460">Magnesium</keyword>
<keyword id="KW-0472">Membrane</keyword>
<keyword id="KW-0479">Metal-binding</keyword>
<keyword id="KW-0496">Mitochondrion</keyword>
<keyword id="KW-0999">Mitochondrion inner membrane</keyword>
<keyword id="KW-1267">Proteomics identification</keyword>
<keyword id="KW-1185">Reference proteome</keyword>
<keyword id="KW-0809">Transit peptide</keyword>
<keyword id="KW-0812">Transmembrane</keyword>
<keyword id="KW-1133">Transmembrane helix</keyword>
<keyword id="KW-0813">Transport</keyword>
<sequence length="443" mass="50318">MECLRSLPCLLPRAMRLPRRTLCALALDVTSVGPPVAACGRRANLIGRSRAAQLCGPDRLRVAGEVHRFRTSDVSQATLASVAPVFTVTKFDKQGNVTSFERKKTELYQELGLQARDLRFQHVMSITVRNNRIIMRMEYLKAVITPECLLILDYRNLNLEQWLFRELPSQLSGEGQLVTYPLPFEFRAIEALLQYWINTLQGKLSILQPLILETLDALVDPKHSSVDRSKLHILLQNGKSLSELETDIKIFKESILEILDEEELLEELCVSKWSDPQVFEKSSAGIDHAEEMELLLENYYRLADDLSNAARELRVLIDDSQSIIFINLDSHRNVMMRLNLQLTMGTFSLSLFGLMGVAFGMNLESSLEEDHRIFWLITGIMFMGSGLIWRRLLSFLGRQLEAPLPPMMASLPKKTLLADRSMELKNSLRLDGLGSGRSILTNR</sequence>
<accession>Q9HD23</accession>
<accession>A8K4U3</accession>
<accession>B3KNN2</accession>
<accession>B4DQL2</accession>
<accession>Q5T3Y1</accession>
<accession>Q6NTG4</accession>
<accession>Q96KF8</accession>
<accession>Q9BVP1</accession>
<proteinExistence type="evidence at protein level"/>
<name>MRS2_HUMAN</name>
<feature type="transit peptide" description="Mitochondrion" evidence="1">
    <location>
        <begin position="1"/>
        <end position="49"/>
    </location>
</feature>
<feature type="chain" id="PRO_0000042837" description="Magnesium transporter MRS2 homolog, mitochondrial">
    <location>
        <begin position="50"/>
        <end position="443"/>
    </location>
</feature>
<feature type="topological domain" description="Mitochondrial matrix" evidence="4 5 6 11 12 13 14 15 16 17 18 19">
    <location>
        <begin position="50"/>
        <end position="339"/>
    </location>
</feature>
<feature type="transmembrane region" description="Helical; Name=1" evidence="4 5 6 11 12 13 14 15 16 17 18 19">
    <location>
        <begin position="340"/>
        <end position="359"/>
    </location>
</feature>
<feature type="topological domain" description="Mitochondrial intermembrane" evidence="4 5 6 11 12 13 14 15 16 17 18 19">
    <location>
        <begin position="360"/>
        <end position="370"/>
    </location>
</feature>
<feature type="transmembrane region" description="Helical; Name=2" evidence="4 5 6 11 12 13 14 15 16 17 18 19">
    <location>
        <begin position="371"/>
        <end position="401"/>
    </location>
</feature>
<feature type="topological domain" description="Mitochondrial matrix" evidence="4 5 6 11 12 13 14 15 16 17 18 19">
    <location>
        <begin position="402"/>
        <end position="443"/>
    </location>
</feature>
<feature type="short sequence motif" description="GMN motif" evidence="4 5 6">
    <location>
        <begin position="360"/>
        <end position="362"/>
    </location>
</feature>
<feature type="binding site" evidence="4 5 6 11 15 18">
    <location>
        <position position="243"/>
    </location>
    <ligand>
        <name>Mg(2+)</name>
        <dbReference type="ChEBI" id="CHEBI:18420"/>
        <label>1</label>
    </ligand>
</feature>
<feature type="binding site" evidence="4 5 6 11 15 18">
    <location>
        <position position="246"/>
    </location>
    <ligand>
        <name>Mg(2+)</name>
        <dbReference type="ChEBI" id="CHEBI:18420"/>
        <label>1</label>
    </ligand>
</feature>
<feature type="binding site" evidence="4 5 6 11 15 18">
    <location>
        <position position="247"/>
    </location>
    <ligand>
        <name>Mg(2+)</name>
        <dbReference type="ChEBI" id="CHEBI:18420"/>
        <label>1</label>
    </ligand>
</feature>
<feature type="binding site" evidence="4 5 6 11 15 18">
    <location>
        <position position="312"/>
    </location>
    <ligand>
        <name>Mg(2+)</name>
        <dbReference type="ChEBI" id="CHEBI:18420"/>
        <label>1</label>
    </ligand>
</feature>
<feature type="binding site" evidence="4 5 6 11 12 13 18">
    <location>
        <position position="329"/>
    </location>
    <ligand>
        <name>Mg(2+)</name>
        <dbReference type="ChEBI" id="CHEBI:18420"/>
        <label>2</label>
    </ligand>
</feature>
<feature type="binding site" evidence="4 5 6 11 12 13 18 19">
    <location>
        <position position="360"/>
    </location>
    <ligand>
        <name>Mg(2+)</name>
        <dbReference type="ChEBI" id="CHEBI:18420"/>
        <label>3</label>
    </ligand>
</feature>
<feature type="binding site" evidence="4 5 6 11 12 13 15 19">
    <location>
        <position position="362"/>
    </location>
    <ligand>
        <name>Mg(2+)</name>
        <dbReference type="ChEBI" id="CHEBI:18420"/>
        <label>3</label>
    </ligand>
</feature>
<feature type="splice variant" id="VSP_016207" description="In isoform 3." evidence="8">
    <original>ERKKTELYQELGLQARD</original>
    <variation>VFESCDNSRVSSDIRLS</variation>
    <location>
        <begin position="101"/>
        <end position="117"/>
    </location>
</feature>
<feature type="splice variant" id="VSP_016208" description="In isoform 3." evidence="8">
    <location>
        <begin position="118"/>
        <end position="443"/>
    </location>
</feature>
<feature type="splice variant" id="VSP_055287" description="In isoform 4." evidence="7">
    <original>YLKAVITPECLLILDYRNLNL</original>
    <variation>KYSLLLESVASILQNSVSFMERQT</variation>
    <location>
        <begin position="139"/>
        <end position="159"/>
    </location>
</feature>
<feature type="splice variant" id="VSP_016209" description="In isoform 2." evidence="7 8">
    <original>M</original>
    <variation>V</variation>
    <location>
        <position position="408"/>
    </location>
</feature>
<feature type="splice variant" id="VSP_016210" description="In isoform 2." evidence="7 8">
    <location>
        <begin position="409"/>
        <end position="443"/>
    </location>
</feature>
<feature type="sequence variant" id="VAR_023782" description="In dbSNP:rs2295651.">
    <original>P</original>
    <variation>S</variation>
    <location>
        <position position="35"/>
    </location>
</feature>
<feature type="sequence variant" id="VAR_061129" description="In dbSNP:rs35261004.">
    <original>P</original>
    <variation>S</variation>
    <location>
        <position position="412"/>
    </location>
</feature>
<feature type="strand" evidence="22">
    <location>
        <begin position="85"/>
        <end position="92"/>
    </location>
</feature>
<feature type="strand" evidence="22">
    <location>
        <begin position="97"/>
        <end position="103"/>
    </location>
</feature>
<feature type="helix" evidence="22">
    <location>
        <begin position="104"/>
        <end position="111"/>
    </location>
</feature>
<feature type="helix" evidence="22">
    <location>
        <begin position="115"/>
        <end position="118"/>
    </location>
</feature>
<feature type="strand" evidence="22">
    <location>
        <begin position="122"/>
        <end position="129"/>
    </location>
</feature>
<feature type="strand" evidence="22">
    <location>
        <begin position="132"/>
        <end position="137"/>
    </location>
</feature>
<feature type="strand" evidence="22">
    <location>
        <begin position="140"/>
        <end position="144"/>
    </location>
</feature>
<feature type="strand" evidence="22">
    <location>
        <begin position="146"/>
        <end position="153"/>
    </location>
</feature>
<feature type="turn" evidence="22">
    <location>
        <begin position="155"/>
        <end position="158"/>
    </location>
</feature>
<feature type="helix" evidence="22">
    <location>
        <begin position="160"/>
        <end position="172"/>
    </location>
</feature>
<feature type="strand" evidence="21">
    <location>
        <begin position="173"/>
        <end position="176"/>
    </location>
</feature>
<feature type="strand" evidence="22">
    <location>
        <begin position="180"/>
        <end position="182"/>
    </location>
</feature>
<feature type="helix" evidence="22">
    <location>
        <begin position="184"/>
        <end position="218"/>
    </location>
</feature>
<feature type="strand" evidence="23">
    <location>
        <begin position="223"/>
        <end position="225"/>
    </location>
</feature>
<feature type="helix" evidence="22">
    <location>
        <begin position="228"/>
        <end position="260"/>
    </location>
</feature>
<feature type="helix" evidence="22">
    <location>
        <begin position="262"/>
        <end position="268"/>
    </location>
</feature>
<feature type="helix" evidence="22">
    <location>
        <begin position="270"/>
        <end position="274"/>
    </location>
</feature>
<feature type="helix" evidence="22">
    <location>
        <begin position="276"/>
        <end position="282"/>
    </location>
</feature>
<feature type="strand" evidence="22">
    <location>
        <begin position="283"/>
        <end position="285"/>
    </location>
</feature>
<feature type="helix" evidence="22">
    <location>
        <begin position="288"/>
        <end position="358"/>
    </location>
</feature>
<feature type="strand" evidence="20">
    <location>
        <begin position="361"/>
        <end position="363"/>
    </location>
</feature>
<feature type="strand" evidence="20">
    <location>
        <begin position="366"/>
        <end position="369"/>
    </location>
</feature>
<feature type="helix" evidence="22">
    <location>
        <begin position="372"/>
        <end position="400"/>
    </location>
</feature>
<organism>
    <name type="scientific">Homo sapiens</name>
    <name type="common">Human</name>
    <dbReference type="NCBI Taxonomy" id="9606"/>
    <lineage>
        <taxon>Eukaryota</taxon>
        <taxon>Metazoa</taxon>
        <taxon>Chordata</taxon>
        <taxon>Craniata</taxon>
        <taxon>Vertebrata</taxon>
        <taxon>Euteleostomi</taxon>
        <taxon>Mammalia</taxon>
        <taxon>Eutheria</taxon>
        <taxon>Euarchontoglires</taxon>
        <taxon>Primates</taxon>
        <taxon>Haplorrhini</taxon>
        <taxon>Catarrhini</taxon>
        <taxon>Hominidae</taxon>
        <taxon>Homo</taxon>
    </lineage>
</organism>